<organism>
    <name type="scientific">Beta vulgaris</name>
    <name type="common">Sugar beet</name>
    <dbReference type="NCBI Taxonomy" id="161934"/>
    <lineage>
        <taxon>Eukaryota</taxon>
        <taxon>Viridiplantae</taxon>
        <taxon>Streptophyta</taxon>
        <taxon>Embryophyta</taxon>
        <taxon>Tracheophyta</taxon>
        <taxon>Spermatophyta</taxon>
        <taxon>Magnoliopsida</taxon>
        <taxon>eudicotyledons</taxon>
        <taxon>Gunneridae</taxon>
        <taxon>Pentapetalae</taxon>
        <taxon>Caryophyllales</taxon>
        <taxon>Chenopodiaceae</taxon>
        <taxon>Betoideae</taxon>
        <taxon>Beta</taxon>
    </lineage>
</organism>
<name>DFAX1_BETVU</name>
<accession>P81493</accession>
<feature type="chain" id="PRO_0000074233" description="Defensin-like protein AX1">
    <location>
        <begin position="1"/>
        <end position="46"/>
    </location>
</feature>
<feature type="disulfide bond" evidence="1">
    <location>
        <begin position="3"/>
        <end position="46"/>
    </location>
</feature>
<feature type="disulfide bond" evidence="1">
    <location>
        <begin position="14"/>
        <end position="34"/>
    </location>
</feature>
<feature type="disulfide bond" evidence="1">
    <location>
        <begin position="20"/>
        <end position="40"/>
    </location>
</feature>
<feature type="disulfide bond" evidence="1">
    <location>
        <begin position="24"/>
        <end position="42"/>
    </location>
</feature>
<comment type="function">
    <text>Strong inhibiting activity against C.beticola and other filamentous fungi. Little or no effect against bacteria.</text>
</comment>
<comment type="tissue specificity">
    <text>Leaves and flowers.</text>
</comment>
<comment type="mass spectrometry" mass="5078.0" error="3.0" method="Electrospray" evidence="2"/>
<comment type="similarity">
    <text evidence="3">Belongs to the DEFL family.</text>
</comment>
<sequence length="46" mass="5086">AICKKPSKFFKGACGRDADCEKACDQENWPGGVCVPFLRCECQRSC</sequence>
<reference key="1">
    <citation type="journal article" date="1995" name="Mol. Plant Microbe Interact.">
        <title>Characterization and localization of new antifungal cysteine-rich proteins from Beta vulgaris.</title>
        <authorList>
            <person name="Kragh K.M."/>
            <person name="Nielsen J.E."/>
            <person name="Nielsen K.K."/>
            <person name="Dreboldt S."/>
            <person name="Mikkelsen J.D."/>
        </authorList>
    </citation>
    <scope>PROTEIN SEQUENCE</scope>
    <scope>MASS SPECTROMETRY</scope>
    <source>
        <strain>cv. Rhizor</strain>
        <strain>cv. Turbo</strain>
        <tissue>Leaf</tissue>
    </source>
</reference>
<protein>
    <recommendedName>
        <fullName>Defensin-like protein AX1</fullName>
    </recommendedName>
    <alternativeName>
        <fullName>Antifungal protein AX1</fullName>
    </alternativeName>
</protein>
<proteinExistence type="evidence at protein level"/>
<dbReference type="SMR" id="P81493"/>
<dbReference type="GO" id="GO:0042742">
    <property type="term" value="P:defense response to bacterium"/>
    <property type="evidence" value="ECO:0007669"/>
    <property type="project" value="UniProtKB-KW"/>
</dbReference>
<dbReference type="GO" id="GO:0050832">
    <property type="term" value="P:defense response to fungus"/>
    <property type="evidence" value="ECO:0007669"/>
    <property type="project" value="UniProtKB-KW"/>
</dbReference>
<dbReference type="GO" id="GO:0031640">
    <property type="term" value="P:killing of cells of another organism"/>
    <property type="evidence" value="ECO:0007669"/>
    <property type="project" value="UniProtKB-KW"/>
</dbReference>
<dbReference type="Gene3D" id="3.30.30.10">
    <property type="entry name" value="Knottin, scorpion toxin-like"/>
    <property type="match status" value="1"/>
</dbReference>
<dbReference type="InterPro" id="IPR008176">
    <property type="entry name" value="Defensin_plant"/>
</dbReference>
<dbReference type="InterPro" id="IPR003614">
    <property type="entry name" value="Scorpion_toxin-like"/>
</dbReference>
<dbReference type="InterPro" id="IPR036574">
    <property type="entry name" value="Scorpion_toxin-like_sf"/>
</dbReference>
<dbReference type="Pfam" id="PF00304">
    <property type="entry name" value="Gamma-thionin"/>
    <property type="match status" value="1"/>
</dbReference>
<dbReference type="PRINTS" id="PR00288">
    <property type="entry name" value="PUROTHIONIN"/>
</dbReference>
<dbReference type="SMART" id="SM00505">
    <property type="entry name" value="Knot1"/>
    <property type="match status" value="1"/>
</dbReference>
<dbReference type="SUPFAM" id="SSF57095">
    <property type="entry name" value="Scorpion toxin-like"/>
    <property type="match status" value="1"/>
</dbReference>
<dbReference type="PROSITE" id="PS00940">
    <property type="entry name" value="GAMMA_THIONIN"/>
    <property type="match status" value="1"/>
</dbReference>
<keyword id="KW-0044">Antibiotic</keyword>
<keyword id="KW-0929">Antimicrobial</keyword>
<keyword id="KW-0903">Direct protein sequencing</keyword>
<keyword id="KW-1015">Disulfide bond</keyword>
<keyword id="KW-0295">Fungicide</keyword>
<keyword id="KW-0611">Plant defense</keyword>
<evidence type="ECO:0000250" key="1"/>
<evidence type="ECO:0000269" key="2">
    <source>
    </source>
</evidence>
<evidence type="ECO:0000305" key="3"/>